<reference key="1">
    <citation type="journal article" date="2015" name="Proc. Natl. Acad. Sci. U.S.A.">
        <title>Specialized insulin is used for chemical warfare by fish-hunting cone snails.</title>
        <authorList>
            <person name="Safavi-Hemami H."/>
            <person name="Gajewiak J."/>
            <person name="Karanth S."/>
            <person name="Robinson S.D."/>
            <person name="Ueberheide B."/>
            <person name="Douglass A.D."/>
            <person name="Schlegel A."/>
            <person name="Imperial J.S."/>
            <person name="Watkins M."/>
            <person name="Bandyopadhyay P.K."/>
            <person name="Yandell M."/>
            <person name="Li Q."/>
            <person name="Purcell A.W."/>
            <person name="Norton R.S."/>
            <person name="Ellgaard L."/>
            <person name="Olivera B.M."/>
        </authorList>
    </citation>
    <scope>NUCLEOTIDE SEQUENCE [MRNA]</scope>
    <scope>AMIDATION AT SER-127</scope>
    <source>
        <tissue>Venom gland</tissue>
    </source>
</reference>
<sequence>MTTSSYFLLVALGLLLYVCRSSFGSEHTCESDASPHPQGVCGSPLAEAVEAACELEQSLQGGTGKKRGRASLLRKRRAFLSMLKARAKRNEASPLQRSGRGIVCECCKNHCNIEELTEYCPPVTEGSG</sequence>
<dbReference type="EMBL" id="KP268619">
    <property type="protein sequence ID" value="AJD85829.1"/>
    <property type="molecule type" value="mRNA"/>
</dbReference>
<dbReference type="GO" id="GO:0005576">
    <property type="term" value="C:extracellular region"/>
    <property type="evidence" value="ECO:0007669"/>
    <property type="project" value="UniProtKB-SubCell"/>
</dbReference>
<dbReference type="GO" id="GO:0005179">
    <property type="term" value="F:hormone activity"/>
    <property type="evidence" value="ECO:0007669"/>
    <property type="project" value="UniProtKB-KW"/>
</dbReference>
<dbReference type="GO" id="GO:0090729">
    <property type="term" value="F:toxin activity"/>
    <property type="evidence" value="ECO:0007669"/>
    <property type="project" value="UniProtKB-KW"/>
</dbReference>
<dbReference type="GO" id="GO:0006006">
    <property type="term" value="P:glucose metabolic process"/>
    <property type="evidence" value="ECO:0007669"/>
    <property type="project" value="UniProtKB-KW"/>
</dbReference>
<dbReference type="Gene3D" id="1.10.100.10">
    <property type="entry name" value="Insulin-like"/>
    <property type="match status" value="1"/>
</dbReference>
<dbReference type="InterPro" id="IPR016179">
    <property type="entry name" value="Insulin-like"/>
</dbReference>
<dbReference type="InterPro" id="IPR036438">
    <property type="entry name" value="Insulin-like_sf"/>
</dbReference>
<dbReference type="InterPro" id="IPR016724">
    <property type="entry name" value="Insulin-rel_pep"/>
</dbReference>
<dbReference type="InterPro" id="IPR022353">
    <property type="entry name" value="Insulin_CS"/>
</dbReference>
<dbReference type="InterPro" id="IPR022352">
    <property type="entry name" value="Insulin_family"/>
</dbReference>
<dbReference type="PANTHER" id="PTHR13647:SF4">
    <property type="entry name" value="INSULIN-LIKE PEPTIDE 1-RELATED"/>
    <property type="match status" value="1"/>
</dbReference>
<dbReference type="PANTHER" id="PTHR13647">
    <property type="entry name" value="INSULIN-LIKE PEPTIDE 2-RELATED"/>
    <property type="match status" value="1"/>
</dbReference>
<dbReference type="Pfam" id="PF00049">
    <property type="entry name" value="Insulin"/>
    <property type="match status" value="1"/>
</dbReference>
<dbReference type="PIRSF" id="PIRSF018431">
    <property type="entry name" value="Molluscan_insulin_rel_peptide"/>
    <property type="match status" value="1"/>
</dbReference>
<dbReference type="PRINTS" id="PR00276">
    <property type="entry name" value="INSULINFAMLY"/>
</dbReference>
<dbReference type="SMART" id="SM00078">
    <property type="entry name" value="IlGF"/>
    <property type="match status" value="1"/>
</dbReference>
<dbReference type="SUPFAM" id="SSF56994">
    <property type="entry name" value="Insulin-like"/>
    <property type="match status" value="1"/>
</dbReference>
<dbReference type="PROSITE" id="PS00262">
    <property type="entry name" value="INSULIN"/>
    <property type="match status" value="1"/>
</dbReference>
<comment type="function">
    <text evidence="2">This venom insulin facilitates prey capture by rapidly inducing hypoglycemic shock. Intraperitoneal injection of this peptide into zebrafish lowers blood glucose with the same potency than human insulin. In vivo, when applied to water, this peptide reduces overall locomotor activity of zebrafish larvae, observed as a significant decrease in the percentage of time spent swimming and movement frequency.</text>
</comment>
<comment type="subunit">
    <text evidence="2">Heterodimer of A and B chains; disulfide-linked.</text>
</comment>
<comment type="subcellular location">
    <subcellularLocation>
        <location evidence="2">Secreted</location>
    </subcellularLocation>
</comment>
<comment type="tissue specificity">
    <text evidence="6">Expressed by the venom gland.</text>
</comment>
<comment type="similarity">
    <text>Belongs to the insulin family.</text>
</comment>
<evidence type="ECO:0000250" key="1">
    <source>
        <dbReference type="UniProtKB" id="A0A0B5ABD9"/>
    </source>
</evidence>
<evidence type="ECO:0000250" key="2">
    <source>
        <dbReference type="UniProtKB" id="A0A0B5AC95"/>
    </source>
</evidence>
<evidence type="ECO:0000255" key="3"/>
<evidence type="ECO:0000303" key="4">
    <source>
    </source>
</evidence>
<evidence type="ECO:0000305" key="5"/>
<evidence type="ECO:0000305" key="6">
    <source>
    </source>
</evidence>
<evidence type="ECO:0000312" key="7">
    <source>
        <dbReference type="EMBL" id="AJD85829.1"/>
    </source>
</evidence>
<feature type="signal peptide" evidence="3">
    <location>
        <begin position="1"/>
        <end position="24"/>
    </location>
</feature>
<feature type="peptide" id="PRO_5002098216" description="Con-Ins F2c B chain" evidence="1">
    <location>
        <begin position="25"/>
        <end position="58"/>
    </location>
</feature>
<feature type="propeptide" id="PRO_0000439338" description="C peptide" evidence="1">
    <location>
        <begin position="59"/>
        <end position="89"/>
    </location>
</feature>
<feature type="peptide" id="PRO_0000439339" description="Con-Ins F2c A chain" evidence="1">
    <location>
        <begin position="90"/>
        <end position="127"/>
    </location>
</feature>
<feature type="modified residue" description="4-carboxyglutamate; partial" evidence="2">
    <location>
        <position position="115"/>
    </location>
</feature>
<feature type="modified residue" description="Serine amide" evidence="6">
    <location>
        <position position="127"/>
    </location>
</feature>
<feature type="disulfide bond" evidence="5">
    <location>
        <begin position="29"/>
        <end position="104"/>
    </location>
</feature>
<feature type="disulfide bond" description="Interchain (between B and A chains)" evidence="2">
    <location>
        <begin position="41"/>
        <end position="107"/>
    </location>
</feature>
<feature type="disulfide bond" description="Interchain (between B and A chains)" evidence="2">
    <location>
        <begin position="53"/>
        <end position="120"/>
    </location>
</feature>
<feature type="disulfide bond" evidence="2">
    <location>
        <begin position="106"/>
        <end position="111"/>
    </location>
</feature>
<accession>A0A0B5A7N5</accession>
<protein>
    <recommendedName>
        <fullName evidence="4">Con-Ins F2c</fullName>
    </recommendedName>
    <alternativeName>
        <fullName evidence="7">Insulin 2c</fullName>
    </alternativeName>
    <component>
        <recommendedName>
            <fullName evidence="4">Con-Ins F2c B chain</fullName>
        </recommendedName>
    </component>
    <component>
        <recommendedName>
            <fullName evidence="4">Con-Ins F2c A chain</fullName>
        </recommendedName>
    </component>
</protein>
<name>INS2C_CONFO</name>
<keyword id="KW-0027">Amidation</keyword>
<keyword id="KW-0119">Carbohydrate metabolism</keyword>
<keyword id="KW-0165">Cleavage on pair of basic residues</keyword>
<keyword id="KW-1015">Disulfide bond</keyword>
<keyword id="KW-0301">Gamma-carboxyglutamic acid</keyword>
<keyword id="KW-0313">Glucose metabolism</keyword>
<keyword id="KW-0372">Hormone</keyword>
<keyword id="KW-0964">Secreted</keyword>
<keyword id="KW-0732">Signal</keyword>
<keyword id="KW-0800">Toxin</keyword>
<organism>
    <name type="scientific">Conus floridulus</name>
    <name type="common">Cone snail</name>
    <name type="synonym">Lividoconus floridulus</name>
    <dbReference type="NCBI Taxonomy" id="97180"/>
    <lineage>
        <taxon>Eukaryota</taxon>
        <taxon>Metazoa</taxon>
        <taxon>Spiralia</taxon>
        <taxon>Lophotrochozoa</taxon>
        <taxon>Mollusca</taxon>
        <taxon>Gastropoda</taxon>
        <taxon>Caenogastropoda</taxon>
        <taxon>Neogastropoda</taxon>
        <taxon>Conoidea</taxon>
        <taxon>Conidae</taxon>
        <taxon>Conus</taxon>
        <taxon>Lividoconus</taxon>
    </lineage>
</organism>
<proteinExistence type="evidence at protein level"/>